<feature type="chain" id="PRO_0000089424" description="Cerebral cavernous malformations 2 protein">
    <location>
        <begin position="1"/>
        <end position="444"/>
    </location>
</feature>
<feature type="domain" description="PID" evidence="3">
    <location>
        <begin position="59"/>
        <end position="248"/>
    </location>
</feature>
<feature type="region of interest" description="Disordered" evidence="4">
    <location>
        <begin position="1"/>
        <end position="37"/>
    </location>
</feature>
<feature type="region of interest" description="Harmonin homology domain">
    <location>
        <begin position="283"/>
        <end position="376"/>
    </location>
</feature>
<feature type="region of interest" description="Disordered" evidence="4">
    <location>
        <begin position="391"/>
        <end position="423"/>
    </location>
</feature>
<feature type="compositionally biased region" description="Basic and acidic residues" evidence="4">
    <location>
        <begin position="22"/>
        <end position="37"/>
    </location>
</feature>
<feature type="compositionally biased region" description="Low complexity" evidence="4">
    <location>
        <begin position="392"/>
        <end position="408"/>
    </location>
</feature>
<feature type="modified residue" description="Phosphoserine" evidence="13">
    <location>
        <position position="15"/>
    </location>
</feature>
<feature type="modified residue" description="Phosphoserine" evidence="14">
    <location>
        <position position="164"/>
    </location>
</feature>
<feature type="modified residue" description="Phosphoserine" evidence="2">
    <location>
        <position position="384"/>
    </location>
</feature>
<feature type="modified residue" description="Phosphoserine" evidence="2">
    <location>
        <position position="393"/>
    </location>
</feature>
<feature type="modified residue" description="Phosphothreonine" evidence="2">
    <location>
        <position position="394"/>
    </location>
</feature>
<feature type="modified residue" description="Phosphoserine" evidence="2">
    <location>
        <position position="396"/>
    </location>
</feature>
<feature type="modified residue" description="Phosphothreonine" evidence="2">
    <location>
        <position position="399"/>
    </location>
</feature>
<feature type="splice variant" id="VSP_024402" description="In isoform 2." evidence="11">
    <original>MEEEGKKGKK</original>
    <variation>MHSSCRQRRNQNLSKEIPQTEFHTGYSMENE</variation>
    <location>
        <begin position="1"/>
        <end position="10"/>
    </location>
</feature>
<feature type="splice variant" id="VSP_046695" description="In isoform 4." evidence="12">
    <location>
        <begin position="11"/>
        <end position="68"/>
    </location>
</feature>
<feature type="splice variant" id="VSP_046696" description="In isoform 3." evidence="12">
    <location>
        <begin position="158"/>
        <end position="248"/>
    </location>
</feature>
<feature type="sequence variant" id="VAR_023575" description="In dbSNP:rs2107732." evidence="6">
    <original>V</original>
    <variation>I</variation>
    <location>
        <position position="53"/>
    </location>
</feature>
<feature type="sequence variant" id="VAR_023576" description="In dbSNP:rs11552377." evidence="6">
    <original>V</original>
    <variation>I</variation>
    <location>
        <position position="120"/>
    </location>
</feature>
<feature type="sequence variant" id="VAR_023577" description="In CCM2; dbSNP:rs137852843." evidence="6">
    <original>L</original>
    <variation>R</variation>
    <location>
        <position position="198"/>
    </location>
</feature>
<feature type="sequence variant" id="VAR_067352" description="In CCM2; associated in cis with Q-229." evidence="8">
    <original>Q</original>
    <variation>H</variation>
    <location>
        <position position="215"/>
    </location>
</feature>
<feature type="sequence variant" id="VAR_067353" description="In CCM2; associated in cis with H-215." evidence="8">
    <original>L</original>
    <variation>Q</variation>
    <location>
        <position position="229"/>
    </location>
</feature>
<feature type="sequence variant" id="VAR_050768" description="In dbSNP:rs2289366.">
    <original>S</original>
    <variation>N</variation>
    <location>
        <position position="289"/>
    </location>
</feature>
<feature type="sequence conflict" description="In Ref. 1; BAG53562." evidence="12" ref="1">
    <original>F</original>
    <variation>C</variation>
    <location>
        <position position="268"/>
    </location>
</feature>
<feature type="sequence conflict" description="In Ref. 2; AAQ15228." evidence="12" ref="2">
    <original>D</original>
    <variation>A</variation>
    <location>
        <position position="440"/>
    </location>
</feature>
<feature type="sequence conflict" description="In Ref. 2; AAQ15228." evidence="12" ref="2">
    <original>A</original>
    <variation>ALWTVDGGAPTPSAQLS</variation>
    <location>
        <position position="444"/>
    </location>
</feature>
<feature type="turn" evidence="17">
    <location>
        <begin position="57"/>
        <end position="60"/>
    </location>
</feature>
<feature type="strand" evidence="17">
    <location>
        <begin position="63"/>
        <end position="76"/>
    </location>
</feature>
<feature type="helix" evidence="17">
    <location>
        <begin position="85"/>
        <end position="97"/>
    </location>
</feature>
<feature type="strand" evidence="17">
    <location>
        <begin position="110"/>
        <end position="115"/>
    </location>
</feature>
<feature type="strand" evidence="17">
    <location>
        <begin position="117"/>
        <end position="127"/>
    </location>
</feature>
<feature type="strand" evidence="17">
    <location>
        <begin position="130"/>
        <end position="135"/>
    </location>
</feature>
<feature type="helix" evidence="17">
    <location>
        <begin position="136"/>
        <end position="138"/>
    </location>
</feature>
<feature type="strand" evidence="17">
    <location>
        <begin position="139"/>
        <end position="146"/>
    </location>
</feature>
<feature type="strand" evidence="17">
    <location>
        <begin position="151"/>
        <end position="157"/>
    </location>
</feature>
<feature type="strand" evidence="17">
    <location>
        <begin position="193"/>
        <end position="202"/>
    </location>
</feature>
<feature type="helix" evidence="17">
    <location>
        <begin position="203"/>
        <end position="219"/>
    </location>
</feature>
<feature type="helix" evidence="16">
    <location>
        <begin position="225"/>
        <end position="238"/>
    </location>
</feature>
<feature type="helix" evidence="15">
    <location>
        <begin position="288"/>
        <end position="291"/>
    </location>
</feature>
<feature type="helix" evidence="15">
    <location>
        <begin position="293"/>
        <end position="306"/>
    </location>
</feature>
<feature type="turn" evidence="15">
    <location>
        <begin position="307"/>
        <end position="309"/>
    </location>
</feature>
<feature type="helix" evidence="15">
    <location>
        <begin position="312"/>
        <end position="326"/>
    </location>
</feature>
<feature type="helix" evidence="15">
    <location>
        <begin position="331"/>
        <end position="342"/>
    </location>
</feature>
<feature type="helix" evidence="15">
    <location>
        <begin position="344"/>
        <end position="356"/>
    </location>
</feature>
<feature type="helix" evidence="15">
    <location>
        <begin position="359"/>
        <end position="371"/>
    </location>
</feature>
<feature type="turn" evidence="19">
    <location>
        <begin position="373"/>
        <end position="375"/>
    </location>
</feature>
<feature type="helix" evidence="18">
    <location>
        <begin position="422"/>
        <end position="435"/>
    </location>
</feature>
<proteinExistence type="evidence at protein level"/>
<name>CCM2_HUMAN</name>
<keyword id="KW-0002">3D-structure</keyword>
<keyword id="KW-0025">Alternative splicing</keyword>
<keyword id="KW-0963">Cytoplasm</keyword>
<keyword id="KW-0217">Developmental protein</keyword>
<keyword id="KW-0903">Direct protein sequencing</keyword>
<keyword id="KW-0225">Disease variant</keyword>
<keyword id="KW-0597">Phosphoprotein</keyword>
<keyword id="KW-1267">Proteomics identification</keyword>
<keyword id="KW-1185">Reference proteome</keyword>
<accession>Q9BSQ5</accession>
<accession>A4D2L4</accession>
<accession>B3KUV0</accession>
<accession>D3DVL4</accession>
<accession>E9PDJ3</accession>
<accession>F5H0E1</accession>
<accession>F5H551</accession>
<accession>Q71RE5</accession>
<accession>Q8TAT4</accession>
<reference key="1">
    <citation type="journal article" date="2004" name="Nat. Genet.">
        <title>Complete sequencing and characterization of 21,243 full-length human cDNAs.</title>
        <authorList>
            <person name="Ota T."/>
            <person name="Suzuki Y."/>
            <person name="Nishikawa T."/>
            <person name="Otsuki T."/>
            <person name="Sugiyama T."/>
            <person name="Irie R."/>
            <person name="Wakamatsu A."/>
            <person name="Hayashi K."/>
            <person name="Sato H."/>
            <person name="Nagai K."/>
            <person name="Kimura K."/>
            <person name="Makita H."/>
            <person name="Sekine M."/>
            <person name="Obayashi M."/>
            <person name="Nishi T."/>
            <person name="Shibahara T."/>
            <person name="Tanaka T."/>
            <person name="Ishii S."/>
            <person name="Yamamoto J."/>
            <person name="Saito K."/>
            <person name="Kawai Y."/>
            <person name="Isono Y."/>
            <person name="Nakamura Y."/>
            <person name="Nagahari K."/>
            <person name="Murakami K."/>
            <person name="Yasuda T."/>
            <person name="Iwayanagi T."/>
            <person name="Wagatsuma M."/>
            <person name="Shiratori A."/>
            <person name="Sudo H."/>
            <person name="Hosoiri T."/>
            <person name="Kaku Y."/>
            <person name="Kodaira H."/>
            <person name="Kondo H."/>
            <person name="Sugawara M."/>
            <person name="Takahashi M."/>
            <person name="Kanda K."/>
            <person name="Yokoi T."/>
            <person name="Furuya T."/>
            <person name="Kikkawa E."/>
            <person name="Omura Y."/>
            <person name="Abe K."/>
            <person name="Kamihara K."/>
            <person name="Katsuta N."/>
            <person name="Sato K."/>
            <person name="Tanikawa M."/>
            <person name="Yamazaki M."/>
            <person name="Ninomiya K."/>
            <person name="Ishibashi T."/>
            <person name="Yamashita H."/>
            <person name="Murakawa K."/>
            <person name="Fujimori K."/>
            <person name="Tanai H."/>
            <person name="Kimata M."/>
            <person name="Watanabe M."/>
            <person name="Hiraoka S."/>
            <person name="Chiba Y."/>
            <person name="Ishida S."/>
            <person name="Ono Y."/>
            <person name="Takiguchi S."/>
            <person name="Watanabe S."/>
            <person name="Yosida M."/>
            <person name="Hotuta T."/>
            <person name="Kusano J."/>
            <person name="Kanehori K."/>
            <person name="Takahashi-Fujii A."/>
            <person name="Hara H."/>
            <person name="Tanase T.-O."/>
            <person name="Nomura Y."/>
            <person name="Togiya S."/>
            <person name="Komai F."/>
            <person name="Hara R."/>
            <person name="Takeuchi K."/>
            <person name="Arita M."/>
            <person name="Imose N."/>
            <person name="Musashino K."/>
            <person name="Yuuki H."/>
            <person name="Oshima A."/>
            <person name="Sasaki N."/>
            <person name="Aotsuka S."/>
            <person name="Yoshikawa Y."/>
            <person name="Matsunawa H."/>
            <person name="Ichihara T."/>
            <person name="Shiohata N."/>
            <person name="Sano S."/>
            <person name="Moriya S."/>
            <person name="Momiyama H."/>
            <person name="Satoh N."/>
            <person name="Takami S."/>
            <person name="Terashima Y."/>
            <person name="Suzuki O."/>
            <person name="Nakagawa S."/>
            <person name="Senoh A."/>
            <person name="Mizoguchi H."/>
            <person name="Goto Y."/>
            <person name="Shimizu F."/>
            <person name="Wakebe H."/>
            <person name="Hishigaki H."/>
            <person name="Watanabe T."/>
            <person name="Sugiyama A."/>
            <person name="Takemoto M."/>
            <person name="Kawakami B."/>
            <person name="Yamazaki M."/>
            <person name="Watanabe K."/>
            <person name="Kumagai A."/>
            <person name="Itakura S."/>
            <person name="Fukuzumi Y."/>
            <person name="Fujimori Y."/>
            <person name="Komiyama M."/>
            <person name="Tashiro H."/>
            <person name="Tanigami A."/>
            <person name="Fujiwara T."/>
            <person name="Ono T."/>
            <person name="Yamada K."/>
            <person name="Fujii Y."/>
            <person name="Ozaki K."/>
            <person name="Hirao M."/>
            <person name="Ohmori Y."/>
            <person name="Kawabata A."/>
            <person name="Hikiji T."/>
            <person name="Kobatake N."/>
            <person name="Inagaki H."/>
            <person name="Ikema Y."/>
            <person name="Okamoto S."/>
            <person name="Okitani R."/>
            <person name="Kawakami T."/>
            <person name="Noguchi S."/>
            <person name="Itoh T."/>
            <person name="Shigeta K."/>
            <person name="Senba T."/>
            <person name="Matsumura K."/>
            <person name="Nakajima Y."/>
            <person name="Mizuno T."/>
            <person name="Morinaga M."/>
            <person name="Sasaki M."/>
            <person name="Togashi T."/>
            <person name="Oyama M."/>
            <person name="Hata H."/>
            <person name="Watanabe M."/>
            <person name="Komatsu T."/>
            <person name="Mizushima-Sugano J."/>
            <person name="Satoh T."/>
            <person name="Shirai Y."/>
            <person name="Takahashi Y."/>
            <person name="Nakagawa K."/>
            <person name="Okumura K."/>
            <person name="Nagase T."/>
            <person name="Nomura N."/>
            <person name="Kikuchi H."/>
            <person name="Masuho Y."/>
            <person name="Yamashita R."/>
            <person name="Nakai K."/>
            <person name="Yada T."/>
            <person name="Nakamura Y."/>
            <person name="Ohara O."/>
            <person name="Isogai T."/>
            <person name="Sugano S."/>
        </authorList>
    </citation>
    <scope>NUCLEOTIDE SEQUENCE [LARGE SCALE MRNA] (ISOFORM 2)</scope>
    <source>
        <tissue>Thymus</tissue>
    </source>
</reference>
<reference key="2">
    <citation type="journal article" date="2004" name="Proc. Natl. Acad. Sci. U.S.A.">
        <title>Large-scale cDNA transfection screening for genes related to cancer development and progression.</title>
        <authorList>
            <person name="Wan D."/>
            <person name="Gong Y."/>
            <person name="Qin W."/>
            <person name="Zhang P."/>
            <person name="Li J."/>
            <person name="Wei L."/>
            <person name="Zhou X."/>
            <person name="Li H."/>
            <person name="Qiu X."/>
            <person name="Zhong F."/>
            <person name="He L."/>
            <person name="Yu J."/>
            <person name="Yao G."/>
            <person name="Jiang H."/>
            <person name="Qian L."/>
            <person name="Yu Y."/>
            <person name="Shu H."/>
            <person name="Chen X."/>
            <person name="Xu H."/>
            <person name="Guo M."/>
            <person name="Pan Z."/>
            <person name="Chen Y."/>
            <person name="Ge C."/>
            <person name="Yang S."/>
            <person name="Gu J."/>
        </authorList>
    </citation>
    <scope>NUCLEOTIDE SEQUENCE [LARGE SCALE MRNA] (ISOFORM 1)</scope>
</reference>
<reference key="3">
    <citation type="journal article" date="2003" name="Nature">
        <title>The DNA sequence of human chromosome 7.</title>
        <authorList>
            <person name="Hillier L.W."/>
            <person name="Fulton R.S."/>
            <person name="Fulton L.A."/>
            <person name="Graves T.A."/>
            <person name="Pepin K.H."/>
            <person name="Wagner-McPherson C."/>
            <person name="Layman D."/>
            <person name="Maas J."/>
            <person name="Jaeger S."/>
            <person name="Walker R."/>
            <person name="Wylie K."/>
            <person name="Sekhon M."/>
            <person name="Becker M.C."/>
            <person name="O'Laughlin M.D."/>
            <person name="Schaller M.E."/>
            <person name="Fewell G.A."/>
            <person name="Delehaunty K.D."/>
            <person name="Miner T.L."/>
            <person name="Nash W.E."/>
            <person name="Cordes M."/>
            <person name="Du H."/>
            <person name="Sun H."/>
            <person name="Edwards J."/>
            <person name="Bradshaw-Cordum H."/>
            <person name="Ali J."/>
            <person name="Andrews S."/>
            <person name="Isak A."/>
            <person name="Vanbrunt A."/>
            <person name="Nguyen C."/>
            <person name="Du F."/>
            <person name="Lamar B."/>
            <person name="Courtney L."/>
            <person name="Kalicki J."/>
            <person name="Ozersky P."/>
            <person name="Bielicki L."/>
            <person name="Scott K."/>
            <person name="Holmes A."/>
            <person name="Harkins R."/>
            <person name="Harris A."/>
            <person name="Strong C.M."/>
            <person name="Hou S."/>
            <person name="Tomlinson C."/>
            <person name="Dauphin-Kohlberg S."/>
            <person name="Kozlowicz-Reilly A."/>
            <person name="Leonard S."/>
            <person name="Rohlfing T."/>
            <person name="Rock S.M."/>
            <person name="Tin-Wollam A.-M."/>
            <person name="Abbott A."/>
            <person name="Minx P."/>
            <person name="Maupin R."/>
            <person name="Strowmatt C."/>
            <person name="Latreille P."/>
            <person name="Miller N."/>
            <person name="Johnson D."/>
            <person name="Murray J."/>
            <person name="Woessner J.P."/>
            <person name="Wendl M.C."/>
            <person name="Yang S.-P."/>
            <person name="Schultz B.R."/>
            <person name="Wallis J.W."/>
            <person name="Spieth J."/>
            <person name="Bieri T.A."/>
            <person name="Nelson J.O."/>
            <person name="Berkowicz N."/>
            <person name="Wohldmann P.E."/>
            <person name="Cook L.L."/>
            <person name="Hickenbotham M.T."/>
            <person name="Eldred J."/>
            <person name="Williams D."/>
            <person name="Bedell J.A."/>
            <person name="Mardis E.R."/>
            <person name="Clifton S.W."/>
            <person name="Chissoe S.L."/>
            <person name="Marra M.A."/>
            <person name="Raymond C."/>
            <person name="Haugen E."/>
            <person name="Gillett W."/>
            <person name="Zhou Y."/>
            <person name="James R."/>
            <person name="Phelps K."/>
            <person name="Iadanoto S."/>
            <person name="Bubb K."/>
            <person name="Simms E."/>
            <person name="Levy R."/>
            <person name="Clendenning J."/>
            <person name="Kaul R."/>
            <person name="Kent W.J."/>
            <person name="Furey T.S."/>
            <person name="Baertsch R.A."/>
            <person name="Brent M.R."/>
            <person name="Keibler E."/>
            <person name="Flicek P."/>
            <person name="Bork P."/>
            <person name="Suyama M."/>
            <person name="Bailey J.A."/>
            <person name="Portnoy M.E."/>
            <person name="Torrents D."/>
            <person name="Chinwalla A.T."/>
            <person name="Gish W.R."/>
            <person name="Eddy S.R."/>
            <person name="McPherson J.D."/>
            <person name="Olson M.V."/>
            <person name="Eichler E.E."/>
            <person name="Green E.D."/>
            <person name="Waterston R.H."/>
            <person name="Wilson R.K."/>
        </authorList>
    </citation>
    <scope>NUCLEOTIDE SEQUENCE [LARGE SCALE GENOMIC DNA]</scope>
</reference>
<reference key="4">
    <citation type="journal article" date="2003" name="Science">
        <title>Human chromosome 7: DNA sequence and biology.</title>
        <authorList>
            <person name="Scherer S.W."/>
            <person name="Cheung J."/>
            <person name="MacDonald J.R."/>
            <person name="Osborne L.R."/>
            <person name="Nakabayashi K."/>
            <person name="Herbrick J.-A."/>
            <person name="Carson A.R."/>
            <person name="Parker-Katiraee L."/>
            <person name="Skaug J."/>
            <person name="Khaja R."/>
            <person name="Zhang J."/>
            <person name="Hudek A.K."/>
            <person name="Li M."/>
            <person name="Haddad M."/>
            <person name="Duggan G.E."/>
            <person name="Fernandez B.A."/>
            <person name="Kanematsu E."/>
            <person name="Gentles S."/>
            <person name="Christopoulos C.C."/>
            <person name="Choufani S."/>
            <person name="Kwasnicka D."/>
            <person name="Zheng X.H."/>
            <person name="Lai Z."/>
            <person name="Nusskern D.R."/>
            <person name="Zhang Q."/>
            <person name="Gu Z."/>
            <person name="Lu F."/>
            <person name="Zeesman S."/>
            <person name="Nowaczyk M.J."/>
            <person name="Teshima I."/>
            <person name="Chitayat D."/>
            <person name="Shuman C."/>
            <person name="Weksberg R."/>
            <person name="Zackai E.H."/>
            <person name="Grebe T.A."/>
            <person name="Cox S.R."/>
            <person name="Kirkpatrick S.J."/>
            <person name="Rahman N."/>
            <person name="Friedman J.M."/>
            <person name="Heng H.H.Q."/>
            <person name="Pelicci P.G."/>
            <person name="Lo-Coco F."/>
            <person name="Belloni E."/>
            <person name="Shaffer L.G."/>
            <person name="Pober B."/>
            <person name="Morton C.C."/>
            <person name="Gusella J.F."/>
            <person name="Bruns G.A.P."/>
            <person name="Korf B.R."/>
            <person name="Quade B.J."/>
            <person name="Ligon A.H."/>
            <person name="Ferguson H."/>
            <person name="Higgins A.W."/>
            <person name="Leach N.T."/>
            <person name="Herrick S.R."/>
            <person name="Lemyre E."/>
            <person name="Farra C.G."/>
            <person name="Kim H.-G."/>
            <person name="Summers A.M."/>
            <person name="Gripp K.W."/>
            <person name="Roberts W."/>
            <person name="Szatmari P."/>
            <person name="Winsor E.J.T."/>
            <person name="Grzeschik K.-H."/>
            <person name="Teebi A."/>
            <person name="Minassian B.A."/>
            <person name="Kere J."/>
            <person name="Armengol L."/>
            <person name="Pujana M.A."/>
            <person name="Estivill X."/>
            <person name="Wilson M.D."/>
            <person name="Koop B.F."/>
            <person name="Tosi S."/>
            <person name="Moore G.E."/>
            <person name="Boright A.P."/>
            <person name="Zlotorynski E."/>
            <person name="Kerem B."/>
            <person name="Kroisel P.M."/>
            <person name="Petek E."/>
            <person name="Oscier D.G."/>
            <person name="Mould S.J."/>
            <person name="Doehner H."/>
            <person name="Doehner K."/>
            <person name="Rommens J.M."/>
            <person name="Vincent J.B."/>
            <person name="Venter J.C."/>
            <person name="Li P.W."/>
            <person name="Mural R.J."/>
            <person name="Adams M.D."/>
            <person name="Tsui L.-C."/>
        </authorList>
    </citation>
    <scope>NUCLEOTIDE SEQUENCE [LARGE SCALE GENOMIC DNA]</scope>
</reference>
<reference key="5">
    <citation type="submission" date="2005-09" db="EMBL/GenBank/DDBJ databases">
        <authorList>
            <person name="Mural R.J."/>
            <person name="Istrail S."/>
            <person name="Sutton G.G."/>
            <person name="Florea L."/>
            <person name="Halpern A.L."/>
            <person name="Mobarry C.M."/>
            <person name="Lippert R."/>
            <person name="Walenz B."/>
            <person name="Shatkay H."/>
            <person name="Dew I."/>
            <person name="Miller J.R."/>
            <person name="Flanigan M.J."/>
            <person name="Edwards N.J."/>
            <person name="Bolanos R."/>
            <person name="Fasulo D."/>
            <person name="Halldorsson B.V."/>
            <person name="Hannenhalli S."/>
            <person name="Turner R."/>
            <person name="Yooseph S."/>
            <person name="Lu F."/>
            <person name="Nusskern D.R."/>
            <person name="Shue B.C."/>
            <person name="Zheng X.H."/>
            <person name="Zhong F."/>
            <person name="Delcher A.L."/>
            <person name="Huson D.H."/>
            <person name="Kravitz S.A."/>
            <person name="Mouchard L."/>
            <person name="Reinert K."/>
            <person name="Remington K.A."/>
            <person name="Clark A.G."/>
            <person name="Waterman M.S."/>
            <person name="Eichler E.E."/>
            <person name="Adams M.D."/>
            <person name="Hunkapiller M.W."/>
            <person name="Myers E.W."/>
            <person name="Venter J.C."/>
        </authorList>
    </citation>
    <scope>NUCLEOTIDE SEQUENCE [LARGE SCALE GENOMIC DNA]</scope>
</reference>
<reference key="6">
    <citation type="journal article" date="2004" name="Genome Res.">
        <title>The status, quality, and expansion of the NIH full-length cDNA project: the Mammalian Gene Collection (MGC).</title>
        <authorList>
            <consortium name="The MGC Project Team"/>
        </authorList>
    </citation>
    <scope>NUCLEOTIDE SEQUENCE [LARGE SCALE MRNA] (ISOFORM 1)</scope>
    <source>
        <tissue>Brain</tissue>
        <tissue>Kidney</tissue>
    </source>
</reference>
<reference key="7">
    <citation type="journal article" date="2003" name="Am. J. Hum. Genet.">
        <title>Mutations in a gene encoding a novel protein containing a phosphotyrosine-binding domain cause type 2 cerebral cavernous malformations.</title>
        <authorList>
            <person name="Liquori C.L."/>
            <person name="Berg M.J."/>
            <person name="Siegel A.M."/>
            <person name="Huang E."/>
            <person name="Zawistowski J.S."/>
            <person name="Stoffer T."/>
            <person name="Verlaan D."/>
            <person name="Balogun F."/>
            <person name="Hughes L."/>
            <person name="Leedom T.P."/>
            <person name="Plummer N.W."/>
            <person name="Cannella M."/>
            <person name="Maglione V."/>
            <person name="Squitieri F."/>
            <person name="Johnson E.W."/>
            <person name="Rouleau G.A."/>
            <person name="Ptacek L."/>
            <person name="Marchuk D.A."/>
        </authorList>
    </citation>
    <scope>INVOLVEMENT IN CCM2</scope>
</reference>
<reference key="8">
    <citation type="journal article" date="2010" name="J. Biol. Chem.">
        <title>Crystal structure of CCM3, a cerebral cavernous malformation protein critical for vascular integrity.</title>
        <authorList>
            <person name="Li X."/>
            <person name="Zhang R."/>
            <person name="Zhang H."/>
            <person name="He Y."/>
            <person name="Ji W."/>
            <person name="Min W."/>
            <person name="Boggon T.J."/>
        </authorList>
    </citation>
    <scope>INTERACTION WITH PDCD10</scope>
</reference>
<reference key="9">
    <citation type="journal article" date="2013" name="J. Proteome Res.">
        <title>Toward a comprehensive characterization of a human cancer cell phosphoproteome.</title>
        <authorList>
            <person name="Zhou H."/>
            <person name="Di Palma S."/>
            <person name="Preisinger C."/>
            <person name="Peng M."/>
            <person name="Polat A.N."/>
            <person name="Heck A.J."/>
            <person name="Mohammed S."/>
        </authorList>
    </citation>
    <scope>PHOSPHORYLATION [LARGE SCALE ANALYSIS] AT SER-15</scope>
    <scope>IDENTIFICATION BY MASS SPECTROMETRY [LARGE SCALE ANALYSIS]</scope>
    <source>
        <tissue>Erythroleukemia</tissue>
    </source>
</reference>
<reference key="10">
    <citation type="journal article" date="2014" name="J. Proteomics">
        <title>An enzyme assisted RP-RPLC approach for in-depth analysis of human liver phosphoproteome.</title>
        <authorList>
            <person name="Bian Y."/>
            <person name="Song C."/>
            <person name="Cheng K."/>
            <person name="Dong M."/>
            <person name="Wang F."/>
            <person name="Huang J."/>
            <person name="Sun D."/>
            <person name="Wang L."/>
            <person name="Ye M."/>
            <person name="Zou H."/>
        </authorList>
    </citation>
    <scope>PHOSPHORYLATION [LARGE SCALE ANALYSIS] AT SER-164</scope>
    <scope>IDENTIFICATION BY MASS SPECTROMETRY [LARGE SCALE ANALYSIS]</scope>
    <source>
        <tissue>Liver</tissue>
    </source>
</reference>
<reference key="11">
    <citation type="journal article" date="2013" name="FEBS Lett.">
        <title>Structural studies of cerebral cavernous malformations 2 (CCM2) reveal a folded helical domain at its C-terminus.</title>
        <authorList>
            <person name="Fisher O.S."/>
            <person name="Zhang R."/>
            <person name="Li X."/>
            <person name="Murphy J.W."/>
            <person name="Demeler B."/>
            <person name="Boggon T.J."/>
        </authorList>
    </citation>
    <scope>X-RAY CRYSTALLOGRAPHY (1.9 ANGSTROMS) OF 283-379</scope>
    <scope>PARTIAL PROTEIN SEQUENCE</scope>
    <scope>DOMAIN</scope>
    <scope>INTERACTION WITH PDCD10</scope>
</reference>
<reference key="12">
    <citation type="journal article" date="2004" name="Am. J. Hum. Genet.">
        <title>Mutations within the MGC4607 gene cause cerebral cavernous malformations.</title>
        <authorList>
            <person name="Denier C."/>
            <person name="Goutagny S."/>
            <person name="Labauge P."/>
            <person name="Krivosic V."/>
            <person name="Arnoult M."/>
            <person name="Cousin A."/>
            <person name="Benabid A.L."/>
            <person name="Comoy J."/>
            <person name="Frerebeau P."/>
            <person name="Gilbert B."/>
            <person name="Houtteville J.P."/>
            <person name="Jan M."/>
            <person name="Lapierre F."/>
            <person name="Loiseau H."/>
            <person name="Menei P."/>
            <person name="Mercier P."/>
            <person name="Moreau J.J."/>
            <person name="Nivelon-Chevallier A."/>
            <person name="Parker F."/>
            <person name="Redondo A.M."/>
            <person name="Scarabin J.M."/>
            <person name="Tremoulet M."/>
            <person name="Zerah M."/>
            <person name="Maciazek J."/>
            <person name="Tournier-Lasserve E."/>
        </authorList>
    </citation>
    <scope>VARIANT CCM2 ARG-198</scope>
    <scope>VARIANTS ILE-53 AND ILE-120</scope>
</reference>
<reference key="13">
    <citation type="journal article" date="2012" name="J. Mol. Neurosci.">
        <title>De Novo MGC4607 gene heterozygous missense variants in a child with multiple cerebral cavernous malformations.</title>
        <authorList>
            <person name="Mosca L."/>
            <person name="Pileggi S."/>
            <person name="Avemaria F."/>
            <person name="Tarlarini C."/>
            <person name="Cigoli M.S."/>
            <person name="Capra V."/>
            <person name="De Marco P."/>
            <person name="Pavanello M."/>
            <person name="Marocchi A."/>
            <person name="Penco S."/>
        </authorList>
    </citation>
    <scope>VARIANTS CCM2 HIS-215 AND GLN-229</scope>
</reference>
<organism>
    <name type="scientific">Homo sapiens</name>
    <name type="common">Human</name>
    <dbReference type="NCBI Taxonomy" id="9606"/>
    <lineage>
        <taxon>Eukaryota</taxon>
        <taxon>Metazoa</taxon>
        <taxon>Chordata</taxon>
        <taxon>Craniata</taxon>
        <taxon>Vertebrata</taxon>
        <taxon>Euteleostomi</taxon>
        <taxon>Mammalia</taxon>
        <taxon>Eutheria</taxon>
        <taxon>Euarchontoglires</taxon>
        <taxon>Primates</taxon>
        <taxon>Haplorrhini</taxon>
        <taxon>Catarrhini</taxon>
        <taxon>Hominidae</taxon>
        <taxon>Homo</taxon>
    </lineage>
</organism>
<evidence type="ECO:0000250" key="1"/>
<evidence type="ECO:0000250" key="2">
    <source>
        <dbReference type="UniProtKB" id="Q8K2Y9"/>
    </source>
</evidence>
<evidence type="ECO:0000255" key="3">
    <source>
        <dbReference type="PROSITE-ProRule" id="PRU00148"/>
    </source>
</evidence>
<evidence type="ECO:0000256" key="4">
    <source>
        <dbReference type="SAM" id="MobiDB-lite"/>
    </source>
</evidence>
<evidence type="ECO:0000269" key="5">
    <source>
    </source>
</evidence>
<evidence type="ECO:0000269" key="6">
    <source>
    </source>
</evidence>
<evidence type="ECO:0000269" key="7">
    <source>
    </source>
</evidence>
<evidence type="ECO:0000269" key="8">
    <source>
    </source>
</evidence>
<evidence type="ECO:0000269" key="9">
    <source>
    </source>
</evidence>
<evidence type="ECO:0000303" key="10">
    <source>
    </source>
</evidence>
<evidence type="ECO:0000303" key="11">
    <source>
    </source>
</evidence>
<evidence type="ECO:0000305" key="12"/>
<evidence type="ECO:0007744" key="13">
    <source>
    </source>
</evidence>
<evidence type="ECO:0007744" key="14">
    <source>
    </source>
</evidence>
<evidence type="ECO:0007829" key="15">
    <source>
        <dbReference type="PDB" id="4FQN"/>
    </source>
</evidence>
<evidence type="ECO:0007829" key="16">
    <source>
        <dbReference type="PDB" id="4TVQ"/>
    </source>
</evidence>
<evidence type="ECO:0007829" key="17">
    <source>
        <dbReference type="PDB" id="4WJ7"/>
    </source>
</evidence>
<evidence type="ECO:0007829" key="18">
    <source>
        <dbReference type="PDB" id="4YKC"/>
    </source>
</evidence>
<evidence type="ECO:0007829" key="19">
    <source>
        <dbReference type="PDB" id="4YL6"/>
    </source>
</evidence>
<dbReference type="EMBL" id="AK098005">
    <property type="protein sequence ID" value="BAG53562.1"/>
    <property type="molecule type" value="mRNA"/>
</dbReference>
<dbReference type="EMBL" id="AF370392">
    <property type="protein sequence ID" value="AAQ15228.1"/>
    <property type="molecule type" value="mRNA"/>
</dbReference>
<dbReference type="EMBL" id="AC004847">
    <property type="status" value="NOT_ANNOTATED_CDS"/>
    <property type="molecule type" value="Genomic_DNA"/>
</dbReference>
<dbReference type="EMBL" id="AC013416">
    <property type="status" value="NOT_ANNOTATED_CDS"/>
    <property type="molecule type" value="Genomic_DNA"/>
</dbReference>
<dbReference type="EMBL" id="CH236960">
    <property type="protein sequence ID" value="EAL23746.1"/>
    <property type="molecule type" value="Genomic_DNA"/>
</dbReference>
<dbReference type="EMBL" id="CH471128">
    <property type="protein sequence ID" value="EAW61061.1"/>
    <property type="molecule type" value="Genomic_DNA"/>
</dbReference>
<dbReference type="EMBL" id="CH471128">
    <property type="protein sequence ID" value="EAW61064.1"/>
    <property type="molecule type" value="Genomic_DNA"/>
</dbReference>
<dbReference type="EMBL" id="BC004903">
    <property type="protein sequence ID" value="AAH04903.1"/>
    <property type="molecule type" value="mRNA"/>
</dbReference>
<dbReference type="EMBL" id="BC008859">
    <property type="protein sequence ID" value="AAH08859.1"/>
    <property type="molecule type" value="mRNA"/>
</dbReference>
<dbReference type="EMBL" id="BC016832">
    <property type="protein sequence ID" value="AAH16832.1"/>
    <property type="molecule type" value="mRNA"/>
</dbReference>
<dbReference type="EMBL" id="BC025958">
    <property type="protein sequence ID" value="AAH25958.1"/>
    <property type="molecule type" value="mRNA"/>
</dbReference>
<dbReference type="CCDS" id="CCDS34630.1">
    <molecule id="Q9BSQ5-2"/>
</dbReference>
<dbReference type="CCDS" id="CCDS5500.1">
    <molecule id="Q9BSQ5-1"/>
</dbReference>
<dbReference type="CCDS" id="CCDS55108.1">
    <molecule id="Q9BSQ5-3"/>
</dbReference>
<dbReference type="CCDS" id="CCDS55109.1">
    <molecule id="Q9BSQ5-4"/>
</dbReference>
<dbReference type="RefSeq" id="NP_001025006.1">
    <molecule id="Q9BSQ5-2"/>
    <property type="nucleotide sequence ID" value="NM_001029835.2"/>
</dbReference>
<dbReference type="RefSeq" id="NP_001161406.1">
    <molecule id="Q9BSQ5-4"/>
    <property type="nucleotide sequence ID" value="NM_001167934.2"/>
</dbReference>
<dbReference type="RefSeq" id="NP_001161407.1">
    <molecule id="Q9BSQ5-3"/>
    <property type="nucleotide sequence ID" value="NM_001167935.2"/>
</dbReference>
<dbReference type="RefSeq" id="NP_113631.1">
    <molecule id="Q9BSQ5-1"/>
    <property type="nucleotide sequence ID" value="NM_031443.4"/>
</dbReference>
<dbReference type="PDB" id="4FQN">
    <property type="method" value="X-ray"/>
    <property type="resolution" value="1.90 A"/>
    <property type="chains" value="A/B/C/D=283-379"/>
</dbReference>
<dbReference type="PDB" id="4TVQ">
    <property type="method" value="X-ray"/>
    <property type="resolution" value="2.80 A"/>
    <property type="chains" value="E=224-239"/>
</dbReference>
<dbReference type="PDB" id="4WJ7">
    <property type="method" value="X-ray"/>
    <property type="resolution" value="2.75 A"/>
    <property type="chains" value="A/B/C/D=51-228"/>
</dbReference>
<dbReference type="PDB" id="4Y5O">
    <property type="method" value="X-ray"/>
    <property type="resolution" value="2.35 A"/>
    <property type="chains" value="A=283-379"/>
</dbReference>
<dbReference type="PDB" id="4YKC">
    <property type="method" value="X-ray"/>
    <property type="resolution" value="2.70 A"/>
    <property type="chains" value="A=290-444"/>
</dbReference>
<dbReference type="PDB" id="4YKD">
    <property type="method" value="X-ray"/>
    <property type="resolution" value="1.93 A"/>
    <property type="chains" value="A=290-376"/>
</dbReference>
<dbReference type="PDB" id="4YL6">
    <property type="method" value="X-ray"/>
    <property type="resolution" value="2.10 A"/>
    <property type="chains" value="A=290-376"/>
</dbReference>
<dbReference type="PDBsum" id="4FQN"/>
<dbReference type="PDBsum" id="4TVQ"/>
<dbReference type="PDBsum" id="4WJ7"/>
<dbReference type="PDBsum" id="4Y5O"/>
<dbReference type="PDBsum" id="4YKC"/>
<dbReference type="PDBsum" id="4YKD"/>
<dbReference type="PDBsum" id="4YL6"/>
<dbReference type="SMR" id="Q9BSQ5"/>
<dbReference type="BioGRID" id="123696">
    <property type="interactions" value="41"/>
</dbReference>
<dbReference type="ComplexPortal" id="CPX-984">
    <property type="entry name" value="CCM endothelial permeability complex"/>
</dbReference>
<dbReference type="CORUM" id="Q9BSQ5"/>
<dbReference type="DIP" id="DIP-40609N"/>
<dbReference type="FunCoup" id="Q9BSQ5">
    <property type="interactions" value="1554"/>
</dbReference>
<dbReference type="IntAct" id="Q9BSQ5">
    <property type="interactions" value="27"/>
</dbReference>
<dbReference type="MINT" id="Q9BSQ5"/>
<dbReference type="STRING" id="9606.ENSP00000370503"/>
<dbReference type="GlyCosmos" id="Q9BSQ5">
    <property type="glycosylation" value="1 site, 1 glycan"/>
</dbReference>
<dbReference type="GlyGen" id="Q9BSQ5">
    <property type="glycosylation" value="2 sites, 1 O-linked glycan (2 sites)"/>
</dbReference>
<dbReference type="iPTMnet" id="Q9BSQ5"/>
<dbReference type="PhosphoSitePlus" id="Q9BSQ5"/>
<dbReference type="BioMuta" id="CCM2"/>
<dbReference type="DMDM" id="74733042"/>
<dbReference type="jPOST" id="Q9BSQ5"/>
<dbReference type="MassIVE" id="Q9BSQ5"/>
<dbReference type="PaxDb" id="9606-ENSP00000370503"/>
<dbReference type="PeptideAtlas" id="Q9BSQ5"/>
<dbReference type="ProteomicsDB" id="19677"/>
<dbReference type="ProteomicsDB" id="25314"/>
<dbReference type="ProteomicsDB" id="26772"/>
<dbReference type="ProteomicsDB" id="78919">
    <molecule id="Q9BSQ5-1"/>
</dbReference>
<dbReference type="ProteomicsDB" id="78920">
    <molecule id="Q9BSQ5-2"/>
</dbReference>
<dbReference type="Pumba" id="Q9BSQ5"/>
<dbReference type="Antibodypedia" id="13519">
    <property type="antibodies" value="353 antibodies from 29 providers"/>
</dbReference>
<dbReference type="DNASU" id="83605"/>
<dbReference type="Ensembl" id="ENST00000258781.11">
    <molecule id="Q9BSQ5-1"/>
    <property type="protein sequence ID" value="ENSP00000258781.7"/>
    <property type="gene ID" value="ENSG00000136280.17"/>
</dbReference>
<dbReference type="Ensembl" id="ENST00000381112.7">
    <molecule id="Q9BSQ5-2"/>
    <property type="protein sequence ID" value="ENSP00000370503.3"/>
    <property type="gene ID" value="ENSG00000136280.17"/>
</dbReference>
<dbReference type="Ensembl" id="ENST00000541586.5">
    <molecule id="Q9BSQ5-4"/>
    <property type="protein sequence ID" value="ENSP00000444725.1"/>
    <property type="gene ID" value="ENSG00000136280.17"/>
</dbReference>
<dbReference type="Ensembl" id="ENST00000544363.5">
    <molecule id="Q9BSQ5-3"/>
    <property type="protein sequence ID" value="ENSP00000438035.1"/>
    <property type="gene ID" value="ENSG00000136280.17"/>
</dbReference>
<dbReference type="GeneID" id="83605"/>
<dbReference type="KEGG" id="hsa:83605"/>
<dbReference type="MANE-Select" id="ENST00000258781.11">
    <property type="protein sequence ID" value="ENSP00000258781.7"/>
    <property type="RefSeq nucleotide sequence ID" value="NM_031443.4"/>
    <property type="RefSeq protein sequence ID" value="NP_113631.1"/>
</dbReference>
<dbReference type="UCSC" id="uc003tmo.4">
    <molecule id="Q9BSQ5-1"/>
    <property type="organism name" value="human"/>
</dbReference>
<dbReference type="AGR" id="HGNC:21708"/>
<dbReference type="CTD" id="83605"/>
<dbReference type="DisGeNET" id="83605"/>
<dbReference type="GeneCards" id="CCM2"/>
<dbReference type="GeneReviews" id="CCM2"/>
<dbReference type="HGNC" id="HGNC:21708">
    <property type="gene designation" value="CCM2"/>
</dbReference>
<dbReference type="HPA" id="ENSG00000136280">
    <property type="expression patterns" value="Tissue enhanced (brain)"/>
</dbReference>
<dbReference type="MalaCards" id="CCM2"/>
<dbReference type="MIM" id="603284">
    <property type="type" value="phenotype"/>
</dbReference>
<dbReference type="MIM" id="607929">
    <property type="type" value="gene"/>
</dbReference>
<dbReference type="neXtProt" id="NX_Q9BSQ5"/>
<dbReference type="OpenTargets" id="ENSG00000136280"/>
<dbReference type="Orphanet" id="221061">
    <property type="disease" value="Familial cerebral cavernous malformation"/>
</dbReference>
<dbReference type="PharmGKB" id="PA26145"/>
<dbReference type="VEuPathDB" id="HostDB:ENSG00000136280"/>
<dbReference type="eggNOG" id="ENOG502QSZM">
    <property type="taxonomic scope" value="Eukaryota"/>
</dbReference>
<dbReference type="GeneTree" id="ENSGT00390000016168"/>
<dbReference type="InParanoid" id="Q9BSQ5"/>
<dbReference type="OMA" id="LKTXDSS"/>
<dbReference type="OrthoDB" id="5828470at2759"/>
<dbReference type="PAN-GO" id="Q9BSQ5">
    <property type="GO annotations" value="2 GO annotations based on evolutionary models"/>
</dbReference>
<dbReference type="PhylomeDB" id="Q9BSQ5"/>
<dbReference type="TreeFam" id="TF328517"/>
<dbReference type="PathwayCommons" id="Q9BSQ5"/>
<dbReference type="SignaLink" id="Q9BSQ5"/>
<dbReference type="SIGNOR" id="Q9BSQ5"/>
<dbReference type="BioGRID-ORCS" id="83605">
    <property type="hits" value="27 hits in 1156 CRISPR screens"/>
</dbReference>
<dbReference type="ChiTaRS" id="CCM2">
    <property type="organism name" value="human"/>
</dbReference>
<dbReference type="EvolutionaryTrace" id="Q9BSQ5"/>
<dbReference type="GeneWiki" id="CCM2"/>
<dbReference type="GenomeRNAi" id="83605"/>
<dbReference type="Pharos" id="Q9BSQ5">
    <property type="development level" value="Tbio"/>
</dbReference>
<dbReference type="PRO" id="PR:Q9BSQ5"/>
<dbReference type="Proteomes" id="UP000005640">
    <property type="component" value="Chromosome 7"/>
</dbReference>
<dbReference type="RNAct" id="Q9BSQ5">
    <property type="molecule type" value="protein"/>
</dbReference>
<dbReference type="Bgee" id="ENSG00000136280">
    <property type="expression patterns" value="Expressed in putamen and 172 other cell types or tissues"/>
</dbReference>
<dbReference type="ExpressionAtlas" id="Q9BSQ5">
    <property type="expression patterns" value="baseline and differential"/>
</dbReference>
<dbReference type="GO" id="GO:0005737">
    <property type="term" value="C:cytoplasm"/>
    <property type="evidence" value="ECO:0000314"/>
    <property type="project" value="UniProtKB"/>
</dbReference>
<dbReference type="GO" id="GO:0005739">
    <property type="term" value="C:mitochondrion"/>
    <property type="evidence" value="ECO:0000314"/>
    <property type="project" value="HPA"/>
</dbReference>
<dbReference type="GO" id="GO:0032991">
    <property type="term" value="C:protein-containing complex"/>
    <property type="evidence" value="ECO:0007669"/>
    <property type="project" value="Ensembl"/>
</dbReference>
<dbReference type="GO" id="GO:0060837">
    <property type="term" value="P:blood vessel endothelial cell differentiation"/>
    <property type="evidence" value="ECO:0007669"/>
    <property type="project" value="Ensembl"/>
</dbReference>
<dbReference type="GO" id="GO:0045216">
    <property type="term" value="P:cell-cell junction organization"/>
    <property type="evidence" value="ECO:0007669"/>
    <property type="project" value="Ensembl"/>
</dbReference>
<dbReference type="GO" id="GO:0001885">
    <property type="term" value="P:endothelial cell development"/>
    <property type="evidence" value="ECO:0007669"/>
    <property type="project" value="Ensembl"/>
</dbReference>
<dbReference type="GO" id="GO:0061154">
    <property type="term" value="P:endothelial tube morphogenesis"/>
    <property type="evidence" value="ECO:0000315"/>
    <property type="project" value="MGI"/>
</dbReference>
<dbReference type="GO" id="GO:0003158">
    <property type="term" value="P:endothelium development"/>
    <property type="evidence" value="ECO:0000303"/>
    <property type="project" value="ComplexPortal"/>
</dbReference>
<dbReference type="GO" id="GO:0007507">
    <property type="term" value="P:heart development"/>
    <property type="evidence" value="ECO:0000318"/>
    <property type="project" value="GO_Central"/>
</dbReference>
<dbReference type="GO" id="GO:0001701">
    <property type="term" value="P:in utero embryonic development"/>
    <property type="evidence" value="ECO:0007669"/>
    <property type="project" value="Ensembl"/>
</dbReference>
<dbReference type="GO" id="GO:0048839">
    <property type="term" value="P:inner ear development"/>
    <property type="evidence" value="ECO:0007669"/>
    <property type="project" value="Ensembl"/>
</dbReference>
<dbReference type="GO" id="GO:0007229">
    <property type="term" value="P:integrin-mediated signaling pathway"/>
    <property type="evidence" value="ECO:0000304"/>
    <property type="project" value="UniProtKB"/>
</dbReference>
<dbReference type="GO" id="GO:0035264">
    <property type="term" value="P:multicellular organism growth"/>
    <property type="evidence" value="ECO:0007669"/>
    <property type="project" value="Ensembl"/>
</dbReference>
<dbReference type="GO" id="GO:0060039">
    <property type="term" value="P:pericardium development"/>
    <property type="evidence" value="ECO:0007669"/>
    <property type="project" value="Ensembl"/>
</dbReference>
<dbReference type="GO" id="GO:0045765">
    <property type="term" value="P:regulation of angiogenesis"/>
    <property type="evidence" value="ECO:0000303"/>
    <property type="project" value="ComplexPortal"/>
</dbReference>
<dbReference type="GO" id="GO:0051403">
    <property type="term" value="P:stress-activated MAPK cascade"/>
    <property type="evidence" value="ECO:0000304"/>
    <property type="project" value="UniProtKB"/>
</dbReference>
<dbReference type="GO" id="GO:0001570">
    <property type="term" value="P:vasculogenesis"/>
    <property type="evidence" value="ECO:0000315"/>
    <property type="project" value="UniProtKB"/>
</dbReference>
<dbReference type="GO" id="GO:0048845">
    <property type="term" value="P:venous blood vessel morphogenesis"/>
    <property type="evidence" value="ECO:0007669"/>
    <property type="project" value="Ensembl"/>
</dbReference>
<dbReference type="CDD" id="cd13516">
    <property type="entry name" value="HHD_CCM2"/>
    <property type="match status" value="1"/>
</dbReference>
<dbReference type="CDD" id="cd13166">
    <property type="entry name" value="PTB_CCM2"/>
    <property type="match status" value="1"/>
</dbReference>
<dbReference type="DisProt" id="DP02978"/>
<dbReference type="FunFam" id="1.20.1160.20:FF:000004">
    <property type="entry name" value="Cerebral cavernous malformation 2"/>
    <property type="match status" value="1"/>
</dbReference>
<dbReference type="Gene3D" id="1.20.1160.20">
    <property type="match status" value="1"/>
</dbReference>
<dbReference type="Gene3D" id="2.30.29.30">
    <property type="entry name" value="Pleckstrin-homology domain (PH domain)/Phosphotyrosine-binding domain (PTB)"/>
    <property type="match status" value="1"/>
</dbReference>
<dbReference type="InterPro" id="IPR032375">
    <property type="entry name" value="CCM2_C"/>
</dbReference>
<dbReference type="InterPro" id="IPR026159">
    <property type="entry name" value="Malcavernin"/>
</dbReference>
<dbReference type="InterPro" id="IPR011993">
    <property type="entry name" value="PH-like_dom_sf"/>
</dbReference>
<dbReference type="InterPro" id="IPR006020">
    <property type="entry name" value="PTB/PI_dom"/>
</dbReference>
<dbReference type="PANTHER" id="PTHR21642:SF4">
    <property type="entry name" value="CEREBRAL CAVERNOUS MALFORMATIONS 2 PROTEIN"/>
    <property type="match status" value="1"/>
</dbReference>
<dbReference type="PANTHER" id="PTHR21642">
    <property type="entry name" value="CEREBRAL CAVERNOUS MALFORMATIONS PROTEIN 2 HOMOLOG"/>
    <property type="match status" value="1"/>
</dbReference>
<dbReference type="Pfam" id="PF16545">
    <property type="entry name" value="CCM2_C"/>
    <property type="match status" value="1"/>
</dbReference>
<dbReference type="PROSITE" id="PS01179">
    <property type="entry name" value="PID"/>
    <property type="match status" value="1"/>
</dbReference>
<gene>
    <name type="primary">CCM2</name>
    <name type="synonym">C7orf22</name>
    <name type="ORF">PP10187</name>
</gene>
<sequence>MEEEGKKGKKPGIVSPFKRVFLKGEKSRDKKAHEKVTERRPLHTVVLSLPERVEPDRLLSDYIEKEVKYLGQLTSIPGYLNPSSRTEILHFIDNAKRAHQLPGHLTQEHDAVLSLSAYNVKLAWRDGEDIILRVPIHDIAAVSYVRDDAAHLVVLKTAQDPGISPSQSLCAESSRGLSAGSLSESAVGPVEACCLVILAAESKVAAEELCCLLGQVFQVVYTESTIDFLDRAIFDGASTPTHHLSLHSDDSSTKVDIKETYEVEASTFCFPESVDVGGASPHSKTISESELSASATELLQDYMLTLRTKLSSQEIQQFAALLHEYRNGASIHEFCINLRQLYGDSRKFLLLGLRPFIPEKDSQHFENFLETIGVKDGRGIITDSFGRHRRALSTTSSSTTNGNRATGSSDDRSAPSEGDEWDRMISDISSDIEALGCSMDQDSA</sequence>
<protein>
    <recommendedName>
        <fullName>Cerebral cavernous malformations 2 protein</fullName>
    </recommendedName>
    <alternativeName>
        <fullName evidence="10">Malcavernin</fullName>
    </alternativeName>
</protein>
<comment type="function">
    <text evidence="1">Component of the CCM signaling pathway which is a crucial regulator of heart and vessel formation and integrity. May act through the stabilization of endothelial cell junctions (By similarity). May function as a scaffold protein for MAP2K3-MAP3K3 signaling. Seems to play a major role in the modulation of MAP3K3-dependent p38 activation induced by hyperosmotic shock (By similarity).</text>
</comment>
<comment type="subunit">
    <text evidence="1 7 9">Part of a complex with MAP2K3, MAP3K3 and RAC1. Binds RAC1 directly and independently of its nucleotide-bound state (By similarity). Interacts with HEG1 and KRIT1; KRIT1 greatly facilitates the interaction with HEG1 (By similarity). Interacts with PDCD10.</text>
</comment>
<comment type="interaction">
    <interactant intactId="EBI-1573056">
        <id>Q9BSQ5</id>
    </interactant>
    <interactant intactId="EBI-6918542">
        <id>Q8TEW6</id>
        <label>DOK4</label>
    </interactant>
    <organismsDiffer>false</organismsDiffer>
    <experiments>3</experiments>
</comment>
<comment type="interaction">
    <interactant intactId="EBI-1573056">
        <id>Q9BSQ5</id>
    </interactant>
    <interactant intactId="EBI-1752118">
        <id>P31273</id>
        <label>HOXC8</label>
    </interactant>
    <organismsDiffer>false</organismsDiffer>
    <experiments>3</experiments>
</comment>
<comment type="interaction">
    <interactant intactId="EBI-1573056">
        <id>Q9BSQ5</id>
    </interactant>
    <interactant intactId="EBI-1573121">
        <id>O00522</id>
        <label>KRIT1</label>
    </interactant>
    <organismsDiffer>false</organismsDiffer>
    <experiments>17</experiments>
</comment>
<comment type="interaction">
    <interactant intactId="EBI-1573056">
        <id>Q9BSQ5</id>
    </interactant>
    <interactant intactId="EBI-740195">
        <id>Q9BUL8</id>
        <label>PDCD10</label>
    </interactant>
    <organismsDiffer>false</organismsDiffer>
    <experiments>5</experiments>
</comment>
<comment type="interaction">
    <interactant intactId="EBI-1573056">
        <id>Q9BSQ5</id>
    </interactant>
    <interactant intactId="EBI-366017">
        <id>Q13671</id>
        <label>RIN1</label>
    </interactant>
    <organismsDiffer>false</organismsDiffer>
    <experiments>4</experiments>
</comment>
<comment type="interaction">
    <interactant intactId="EBI-1573056">
        <id>Q9BSQ5</id>
    </interactant>
    <interactant intactId="EBI-12344941">
        <id>Q9H1K6</id>
        <label>TLNRD1</label>
    </interactant>
    <organismsDiffer>false</organismsDiffer>
    <experiments>4</experiments>
</comment>
<comment type="interaction">
    <interactant intactId="EBI-1573056">
        <id>Q9BSQ5</id>
    </interactant>
    <interactant intactId="EBI-1797313">
        <id>Q8WVJ9</id>
        <label>TWIST2</label>
    </interactant>
    <organismsDiffer>false</organismsDiffer>
    <experiments>3</experiments>
</comment>
<comment type="interaction">
    <interactant intactId="EBI-1573056">
        <id>Q9BSQ5</id>
    </interactant>
    <interactant intactId="EBI-948213">
        <id>Q96N03</id>
        <label>VSTM2L</label>
    </interactant>
    <organismsDiffer>false</organismsDiffer>
    <experiments>3</experiments>
</comment>
<comment type="interaction">
    <interactant intactId="EBI-16157769">
        <id>Q9BSQ5-1</id>
    </interactant>
    <interactant intactId="EBI-1573121">
        <id>O00522</id>
        <label>KRIT1</label>
    </interactant>
    <organismsDiffer>false</organismsDiffer>
    <experiments>2</experiments>
</comment>
<comment type="interaction">
    <interactant intactId="EBI-16157769">
        <id>Q9BSQ5-1</id>
    </interactant>
    <interactant intactId="EBI-307281">
        <id>Q99759</id>
        <label>MAP3K3</label>
    </interactant>
    <organismsDiffer>false</organismsDiffer>
    <experiments>6</experiments>
</comment>
<comment type="subcellular location">
    <subcellularLocation>
        <location evidence="1">Cytoplasm</location>
    </subcellularLocation>
</comment>
<comment type="alternative products">
    <event type="alternative splicing"/>
    <isoform>
        <id>Q9BSQ5-1</id>
        <name>1</name>
        <sequence type="displayed"/>
    </isoform>
    <isoform>
        <id>Q9BSQ5-2</id>
        <name>2</name>
        <sequence type="described" ref="VSP_024402"/>
    </isoform>
    <isoform>
        <id>Q9BSQ5-3</id>
        <name>3</name>
        <sequence type="described" ref="VSP_046696"/>
    </isoform>
    <isoform>
        <id>Q9BSQ5-4</id>
        <name>4</name>
        <sequence type="described" ref="VSP_046695"/>
    </isoform>
</comment>
<comment type="domain">
    <text evidence="9">The C-terminal region constitutes an independently folded domain that has structural similarity with the USH1C (harmonin) N-terminus, despite very low sequence similarity.</text>
</comment>
<comment type="disease" evidence="5 6 8">
    <disease id="DI-00256">
        <name>Cerebral cavernous malformations 2</name>
        <acronym>CCM2</acronym>
        <description>A form of cerebral cavernous malformations, a congenital vascular anomaly of the central nervous system that can result in hemorrhagic stroke, seizures, recurrent headaches, and focal neurologic deficits. The lesions are characterized by grossly enlarged blood vessels consisting of a single layer of endothelium and without any intervening neural tissue, ranging in diameter from a few millimeters to several centimeters. CCM2 inheritance is autosomal dominant.</description>
        <dbReference type="MIM" id="603284"/>
    </disease>
    <text>The disease is caused by variants affecting the gene represented in this entry.</text>
</comment>
<comment type="similarity">
    <text evidence="12">Belongs to the CCM2 family.</text>
</comment>